<accession>Q54471</accession>
<dbReference type="EMBL" id="L24960">
    <property type="protein sequence ID" value="AAA26562.1"/>
    <property type="molecule type" value="Genomic_DNA"/>
</dbReference>
<dbReference type="RefSeq" id="WP_033643836.1">
    <property type="nucleotide sequence ID" value="NZ_WUUW01000005.1"/>
</dbReference>
<dbReference type="SMR" id="Q54471"/>
<dbReference type="STRING" id="273526.SMDB11_2659"/>
<dbReference type="GeneID" id="64307347"/>
<dbReference type="PATRIC" id="fig|615.103.peg.3416"/>
<dbReference type="GO" id="GO:0009279">
    <property type="term" value="C:cell outer membrane"/>
    <property type="evidence" value="ECO:0007669"/>
    <property type="project" value="UniProtKB-SubCell"/>
</dbReference>
<dbReference type="GO" id="GO:0046930">
    <property type="term" value="C:pore complex"/>
    <property type="evidence" value="ECO:0007669"/>
    <property type="project" value="UniProtKB-KW"/>
</dbReference>
<dbReference type="GO" id="GO:0015288">
    <property type="term" value="F:porin activity"/>
    <property type="evidence" value="ECO:0007669"/>
    <property type="project" value="UniProtKB-KW"/>
</dbReference>
<dbReference type="GO" id="GO:0034220">
    <property type="term" value="P:monoatomic ion transmembrane transport"/>
    <property type="evidence" value="ECO:0007669"/>
    <property type="project" value="InterPro"/>
</dbReference>
<dbReference type="CDD" id="cd00342">
    <property type="entry name" value="gram_neg_porins"/>
    <property type="match status" value="1"/>
</dbReference>
<dbReference type="Gene3D" id="2.40.160.10">
    <property type="entry name" value="Porin"/>
    <property type="match status" value="1"/>
</dbReference>
<dbReference type="InterPro" id="IPR050298">
    <property type="entry name" value="Gram-neg_bact_OMP"/>
</dbReference>
<dbReference type="InterPro" id="IPR033900">
    <property type="entry name" value="Gram_neg_porin_domain"/>
</dbReference>
<dbReference type="InterPro" id="IPR023614">
    <property type="entry name" value="Porin_dom_sf"/>
</dbReference>
<dbReference type="InterPro" id="IPR001897">
    <property type="entry name" value="Porin_gammaproteobac"/>
</dbReference>
<dbReference type="InterPro" id="IPR001702">
    <property type="entry name" value="Porin_Gram-ve"/>
</dbReference>
<dbReference type="InterPro" id="IPR013793">
    <property type="entry name" value="Porin_Gram-ve_CS"/>
</dbReference>
<dbReference type="NCBIfam" id="NF007841">
    <property type="entry name" value="PRK10554.1"/>
    <property type="match status" value="1"/>
</dbReference>
<dbReference type="PANTHER" id="PTHR34501:SF1">
    <property type="entry name" value="OUTER MEMBRANE PORIN C"/>
    <property type="match status" value="1"/>
</dbReference>
<dbReference type="PANTHER" id="PTHR34501">
    <property type="entry name" value="PROTEIN YDDL-RELATED"/>
    <property type="match status" value="1"/>
</dbReference>
<dbReference type="Pfam" id="PF00267">
    <property type="entry name" value="Porin_1"/>
    <property type="match status" value="1"/>
</dbReference>
<dbReference type="PRINTS" id="PR00183">
    <property type="entry name" value="ECOLIPORIN"/>
</dbReference>
<dbReference type="PRINTS" id="PR00182">
    <property type="entry name" value="ECOLNEIPORIN"/>
</dbReference>
<dbReference type="SUPFAM" id="SSF56935">
    <property type="entry name" value="Porins"/>
    <property type="match status" value="1"/>
</dbReference>
<dbReference type="PROSITE" id="PS00576">
    <property type="entry name" value="GRAM_NEG_PORIN"/>
    <property type="match status" value="1"/>
</dbReference>
<feature type="signal peptide" evidence="1">
    <location>
        <begin position="1"/>
        <end position="21"/>
    </location>
</feature>
<feature type="chain" id="PRO_0000025233" description="Outer membrane porin C">
    <location>
        <begin position="22"/>
        <end position="376"/>
    </location>
</feature>
<reference key="1">
    <citation type="journal article" date="1994" name="Microbiology">
        <title>Molecular characterization of a 40 kDa OmpC-like porin from Serratia marcescens.</title>
        <authorList>
            <person name="Hutsul J.A.M."/>
            <person name="Worobec E.A."/>
        </authorList>
    </citation>
    <scope>NUCLEOTIDE SEQUENCE [GENOMIC DNA]</scope>
    <source>
        <strain>UOC-51</strain>
    </source>
</reference>
<sequence>MKLRVLSLMVPALLVAGTAGAAEIYNKDGNKLDLYGKVDGLHYFSSNNGVDGDQSYMRFGLRGETQISDQLTGYGQWEYQANLNHAENQDNKNFTRYGFAGLKFGDYGSFDYGRNTGVLYDVAAYTDLQPEFDGMTYGADQFMFQRSSGLATYRNNDFFGLVDGLNFALQYQGKNGNGEETNNGRDVLGQNGEGYGMSMSYDMGYGISAAGAFFNSRRTSEQNGANGHQNIMGRGDKAEGYSGGLKYDANDVYLAVMFTQSYNAARFGSSDSSVYGYANKAQSFEAYAHYQFDFGLRPFVGYNQTKGKDLGRAGNGKDYGDQDLVKFVDLGATYFFNKNMSTYVDYKINLVDNNDFTDAAGINTDNVVAVGLVYQF</sequence>
<name>OMPC_SERMA</name>
<keyword id="KW-0998">Cell outer membrane</keyword>
<keyword id="KW-0406">Ion transport</keyword>
<keyword id="KW-0472">Membrane</keyword>
<keyword id="KW-0626">Porin</keyword>
<keyword id="KW-0732">Signal</keyword>
<keyword id="KW-0812">Transmembrane</keyword>
<keyword id="KW-1134">Transmembrane beta strand</keyword>
<keyword id="KW-0813">Transport</keyword>
<evidence type="ECO:0000250" key="1"/>
<evidence type="ECO:0000305" key="2"/>
<organism>
    <name type="scientific">Serratia marcescens</name>
    <dbReference type="NCBI Taxonomy" id="615"/>
    <lineage>
        <taxon>Bacteria</taxon>
        <taxon>Pseudomonadati</taxon>
        <taxon>Pseudomonadota</taxon>
        <taxon>Gammaproteobacteria</taxon>
        <taxon>Enterobacterales</taxon>
        <taxon>Yersiniaceae</taxon>
        <taxon>Serratia</taxon>
    </lineage>
</organism>
<gene>
    <name type="primary">ompC</name>
</gene>
<protein>
    <recommendedName>
        <fullName>Outer membrane porin C</fullName>
    </recommendedName>
    <alternativeName>
        <fullName>Outer membrane protein C</fullName>
    </alternativeName>
    <alternativeName>
        <fullName>Porin OmpC</fullName>
    </alternativeName>
</protein>
<proteinExistence type="inferred from homology"/>
<comment type="function">
    <text>Forms pores that allow passive diffusion of small molecules across the outer membrane.</text>
</comment>
<comment type="subunit">
    <text evidence="1">Homotrimer.</text>
</comment>
<comment type="subcellular location">
    <subcellularLocation>
        <location>Cell outer membrane</location>
        <topology>Multi-pass membrane protein</topology>
    </subcellularLocation>
</comment>
<comment type="similarity">
    <text evidence="2">Belongs to the Gram-negative porin family.</text>
</comment>